<reference key="1">
    <citation type="journal article" date="1999" name="DNA Res.">
        <title>Prediction of the coding sequences of unidentified human genes. XV. The complete sequences of 100 new cDNA clones from brain which code for large proteins in vitro.</title>
        <authorList>
            <person name="Nagase T."/>
            <person name="Ishikawa K."/>
            <person name="Kikuno R."/>
            <person name="Hirosawa M."/>
            <person name="Nomura N."/>
            <person name="Ohara O."/>
        </authorList>
    </citation>
    <scope>NUCLEOTIDE SEQUENCE [LARGE SCALE MRNA] (ISOFORM 1)</scope>
    <source>
        <tissue>Brain</tissue>
    </source>
</reference>
<reference key="2">
    <citation type="journal article" date="2003" name="Nature">
        <title>The DNA sequence and analysis of human chromosome 6.</title>
        <authorList>
            <person name="Mungall A.J."/>
            <person name="Palmer S.A."/>
            <person name="Sims S.K."/>
            <person name="Edwards C.A."/>
            <person name="Ashurst J.L."/>
            <person name="Wilming L."/>
            <person name="Jones M.C."/>
            <person name="Horton R."/>
            <person name="Hunt S.E."/>
            <person name="Scott C.E."/>
            <person name="Gilbert J.G.R."/>
            <person name="Clamp M.E."/>
            <person name="Bethel G."/>
            <person name="Milne S."/>
            <person name="Ainscough R."/>
            <person name="Almeida J.P."/>
            <person name="Ambrose K.D."/>
            <person name="Andrews T.D."/>
            <person name="Ashwell R.I.S."/>
            <person name="Babbage A.K."/>
            <person name="Bagguley C.L."/>
            <person name="Bailey J."/>
            <person name="Banerjee R."/>
            <person name="Barker D.J."/>
            <person name="Barlow K.F."/>
            <person name="Bates K."/>
            <person name="Beare D.M."/>
            <person name="Beasley H."/>
            <person name="Beasley O."/>
            <person name="Bird C.P."/>
            <person name="Blakey S.E."/>
            <person name="Bray-Allen S."/>
            <person name="Brook J."/>
            <person name="Brown A.J."/>
            <person name="Brown J.Y."/>
            <person name="Burford D.C."/>
            <person name="Burrill W."/>
            <person name="Burton J."/>
            <person name="Carder C."/>
            <person name="Carter N.P."/>
            <person name="Chapman J.C."/>
            <person name="Clark S.Y."/>
            <person name="Clark G."/>
            <person name="Clee C.M."/>
            <person name="Clegg S."/>
            <person name="Cobley V."/>
            <person name="Collier R.E."/>
            <person name="Collins J.E."/>
            <person name="Colman L.K."/>
            <person name="Corby N.R."/>
            <person name="Coville G.J."/>
            <person name="Culley K.M."/>
            <person name="Dhami P."/>
            <person name="Davies J."/>
            <person name="Dunn M."/>
            <person name="Earthrowl M.E."/>
            <person name="Ellington A.E."/>
            <person name="Evans K.A."/>
            <person name="Faulkner L."/>
            <person name="Francis M.D."/>
            <person name="Frankish A."/>
            <person name="Frankland J."/>
            <person name="French L."/>
            <person name="Garner P."/>
            <person name="Garnett J."/>
            <person name="Ghori M.J."/>
            <person name="Gilby L.M."/>
            <person name="Gillson C.J."/>
            <person name="Glithero R.J."/>
            <person name="Grafham D.V."/>
            <person name="Grant M."/>
            <person name="Gribble S."/>
            <person name="Griffiths C."/>
            <person name="Griffiths M.N.D."/>
            <person name="Hall R."/>
            <person name="Halls K.S."/>
            <person name="Hammond S."/>
            <person name="Harley J.L."/>
            <person name="Hart E.A."/>
            <person name="Heath P.D."/>
            <person name="Heathcott R."/>
            <person name="Holmes S.J."/>
            <person name="Howden P.J."/>
            <person name="Howe K.L."/>
            <person name="Howell G.R."/>
            <person name="Huckle E."/>
            <person name="Humphray S.J."/>
            <person name="Humphries M.D."/>
            <person name="Hunt A.R."/>
            <person name="Johnson C.M."/>
            <person name="Joy A.A."/>
            <person name="Kay M."/>
            <person name="Keenan S.J."/>
            <person name="Kimberley A.M."/>
            <person name="King A."/>
            <person name="Laird G.K."/>
            <person name="Langford C."/>
            <person name="Lawlor S."/>
            <person name="Leongamornlert D.A."/>
            <person name="Leversha M."/>
            <person name="Lloyd C.R."/>
            <person name="Lloyd D.M."/>
            <person name="Loveland J.E."/>
            <person name="Lovell J."/>
            <person name="Martin S."/>
            <person name="Mashreghi-Mohammadi M."/>
            <person name="Maslen G.L."/>
            <person name="Matthews L."/>
            <person name="McCann O.T."/>
            <person name="McLaren S.J."/>
            <person name="McLay K."/>
            <person name="McMurray A."/>
            <person name="Moore M.J.F."/>
            <person name="Mullikin J.C."/>
            <person name="Niblett D."/>
            <person name="Nickerson T."/>
            <person name="Novik K.L."/>
            <person name="Oliver K."/>
            <person name="Overton-Larty E.K."/>
            <person name="Parker A."/>
            <person name="Patel R."/>
            <person name="Pearce A.V."/>
            <person name="Peck A.I."/>
            <person name="Phillimore B.J.C.T."/>
            <person name="Phillips S."/>
            <person name="Plumb R.W."/>
            <person name="Porter K.M."/>
            <person name="Ramsey Y."/>
            <person name="Ranby S.A."/>
            <person name="Rice C.M."/>
            <person name="Ross M.T."/>
            <person name="Searle S.M."/>
            <person name="Sehra H.K."/>
            <person name="Sheridan E."/>
            <person name="Skuce C.D."/>
            <person name="Smith S."/>
            <person name="Smith M."/>
            <person name="Spraggon L."/>
            <person name="Squares S.L."/>
            <person name="Steward C.A."/>
            <person name="Sycamore N."/>
            <person name="Tamlyn-Hall G."/>
            <person name="Tester J."/>
            <person name="Theaker A.J."/>
            <person name="Thomas D.W."/>
            <person name="Thorpe A."/>
            <person name="Tracey A."/>
            <person name="Tromans A."/>
            <person name="Tubby B."/>
            <person name="Wall M."/>
            <person name="Wallis J.M."/>
            <person name="West A.P."/>
            <person name="White S.S."/>
            <person name="Whitehead S.L."/>
            <person name="Whittaker H."/>
            <person name="Wild A."/>
            <person name="Willey D.J."/>
            <person name="Wilmer T.E."/>
            <person name="Wood J.M."/>
            <person name="Wray P.W."/>
            <person name="Wyatt J.C."/>
            <person name="Young L."/>
            <person name="Younger R.M."/>
            <person name="Bentley D.R."/>
            <person name="Coulson A."/>
            <person name="Durbin R.M."/>
            <person name="Hubbard T."/>
            <person name="Sulston J.E."/>
            <person name="Dunham I."/>
            <person name="Rogers J."/>
            <person name="Beck S."/>
        </authorList>
    </citation>
    <scope>NUCLEOTIDE SEQUENCE [LARGE SCALE GENOMIC DNA]</scope>
</reference>
<reference key="3">
    <citation type="submission" date="2005-07" db="EMBL/GenBank/DDBJ databases">
        <authorList>
            <person name="Mural R.J."/>
            <person name="Istrail S."/>
            <person name="Sutton G.G."/>
            <person name="Florea L."/>
            <person name="Halpern A.L."/>
            <person name="Mobarry C.M."/>
            <person name="Lippert R."/>
            <person name="Walenz B."/>
            <person name="Shatkay H."/>
            <person name="Dew I."/>
            <person name="Miller J.R."/>
            <person name="Flanigan M.J."/>
            <person name="Edwards N.J."/>
            <person name="Bolanos R."/>
            <person name="Fasulo D."/>
            <person name="Halldorsson B.V."/>
            <person name="Hannenhalli S."/>
            <person name="Turner R."/>
            <person name="Yooseph S."/>
            <person name="Lu F."/>
            <person name="Nusskern D.R."/>
            <person name="Shue B.C."/>
            <person name="Zheng X.H."/>
            <person name="Zhong F."/>
            <person name="Delcher A.L."/>
            <person name="Huson D.H."/>
            <person name="Kravitz S.A."/>
            <person name="Mouchard L."/>
            <person name="Reinert K."/>
            <person name="Remington K.A."/>
            <person name="Clark A.G."/>
            <person name="Waterman M.S."/>
            <person name="Eichler E.E."/>
            <person name="Adams M.D."/>
            <person name="Hunkapiller M.W."/>
            <person name="Myers E.W."/>
            <person name="Venter J.C."/>
        </authorList>
    </citation>
    <scope>NUCLEOTIDE SEQUENCE [LARGE SCALE GENOMIC DNA]</scope>
</reference>
<reference key="4">
    <citation type="journal article" date="2004" name="Genome Res.">
        <title>The status, quality, and expansion of the NIH full-length cDNA project: the Mammalian Gene Collection (MGC).</title>
        <authorList>
            <consortium name="The MGC Project Team"/>
        </authorList>
    </citation>
    <scope>NUCLEOTIDE SEQUENCE [LARGE SCALE MRNA] (ISOFORMS 2 AND 3)</scope>
    <source>
        <tissue>Brain</tissue>
    </source>
</reference>
<reference key="5">
    <citation type="journal article" date="2006" name="Mol. Cell">
        <title>ING tumor suppressor proteins are critical regulators of chromatin acetylation required for genome expression and perpetuation.</title>
        <authorList>
            <person name="Doyon Y."/>
            <person name="Cayrou C."/>
            <person name="Ullah M."/>
            <person name="Landry A.-J."/>
            <person name="Cote V."/>
            <person name="Selleck W."/>
            <person name="Lane W.S."/>
            <person name="Tan S."/>
            <person name="Yang X.-J."/>
            <person name="Cote J."/>
        </authorList>
    </citation>
    <scope>FUNCTION</scope>
    <scope>IDENTIFICATION IN THE MOZ/MORF COMPLEX</scope>
</reference>
<reference key="6">
    <citation type="journal article" date="2008" name="Mol. Cell. Biol.">
        <title>Molecular architecture of quartet MOZ/MORF histone acetyltransferase complexes.</title>
        <authorList>
            <person name="Ullah M."/>
            <person name="Pelletier N."/>
            <person name="Xiao L."/>
            <person name="Zhao S.P."/>
            <person name="Wang K."/>
            <person name="Degerny C."/>
            <person name="Tahmasebi S."/>
            <person name="Cayrou C."/>
            <person name="Doyon Y."/>
            <person name="Goh S.-L."/>
            <person name="Champagne N."/>
            <person name="Cote J."/>
            <person name="Yang X.-J."/>
        </authorList>
    </citation>
    <scope>IDENTIFICATION IN THE MOZ/MORF COMPLEX</scope>
</reference>
<reference key="7">
    <citation type="journal article" date="2009" name="Sci. Signal.">
        <title>Quantitative phosphoproteomic analysis of T cell receptor signaling reveals system-wide modulation of protein-protein interactions.</title>
        <authorList>
            <person name="Mayya V."/>
            <person name="Lundgren D.H."/>
            <person name="Hwang S.-I."/>
            <person name="Rezaul K."/>
            <person name="Wu L."/>
            <person name="Eng J.K."/>
            <person name="Rodionov V."/>
            <person name="Han D.K."/>
        </authorList>
    </citation>
    <scope>PHOSPHORYLATION [LARGE SCALE ANALYSIS] AT SER-962 AND SER-965</scope>
    <scope>IDENTIFICATION BY MASS SPECTROMETRY [LARGE SCALE ANALYSIS]</scope>
    <source>
        <tissue>Leukemic T-cell</tissue>
    </source>
</reference>
<reference key="8">
    <citation type="journal article" date="2009" name="Science">
        <title>Lysine acetylation targets protein complexes and co-regulates major cellular functions.</title>
        <authorList>
            <person name="Choudhary C."/>
            <person name="Kumar C."/>
            <person name="Gnad F."/>
            <person name="Nielsen M.L."/>
            <person name="Rehman M."/>
            <person name="Walther T.C."/>
            <person name="Olsen J.V."/>
            <person name="Mann M."/>
        </authorList>
    </citation>
    <scope>ACETYLATION [LARGE SCALE ANALYSIS] AT LYS-447; LYS-449 AND LYS-671</scope>
    <scope>IDENTIFICATION BY MASS SPECTROMETRY [LARGE SCALE ANALYSIS]</scope>
</reference>
<reference key="9">
    <citation type="journal article" date="2010" name="Sci. Signal.">
        <title>Quantitative phosphoproteomics reveals widespread full phosphorylation site occupancy during mitosis.</title>
        <authorList>
            <person name="Olsen J.V."/>
            <person name="Vermeulen M."/>
            <person name="Santamaria A."/>
            <person name="Kumar C."/>
            <person name="Miller M.L."/>
            <person name="Jensen L.J."/>
            <person name="Gnad F."/>
            <person name="Cox J."/>
            <person name="Jensen T.S."/>
            <person name="Nigg E.A."/>
            <person name="Brunak S."/>
            <person name="Mann M."/>
        </authorList>
    </citation>
    <scope>PHOSPHORYLATION [LARGE SCALE ANALYSIS] AT SER-900</scope>
    <scope>IDENTIFICATION BY MASS SPECTROMETRY [LARGE SCALE ANALYSIS]</scope>
    <source>
        <tissue>Cervix carcinoma</tissue>
    </source>
</reference>
<reference key="10">
    <citation type="journal article" date="2011" name="Sci. Signal.">
        <title>System-wide temporal characterization of the proteome and phosphoproteome of human embryonic stem cell differentiation.</title>
        <authorList>
            <person name="Rigbolt K.T."/>
            <person name="Prokhorova T.A."/>
            <person name="Akimov V."/>
            <person name="Henningsen J."/>
            <person name="Johansen P.T."/>
            <person name="Kratchmarova I."/>
            <person name="Kassem M."/>
            <person name="Mann M."/>
            <person name="Olsen J.V."/>
            <person name="Blagoev B."/>
        </authorList>
    </citation>
    <scope>PHOSPHORYLATION [LARGE SCALE ANALYSIS] AT SER-17; SER-400; SER-403 AND SER-900</scope>
    <scope>IDENTIFICATION BY MASS SPECTROMETRY [LARGE SCALE ANALYSIS]</scope>
</reference>
<reference key="11">
    <citation type="journal article" date="2013" name="J. Proteome Res.">
        <title>Toward a comprehensive characterization of a human cancer cell phosphoproteome.</title>
        <authorList>
            <person name="Zhou H."/>
            <person name="Di Palma S."/>
            <person name="Preisinger C."/>
            <person name="Peng M."/>
            <person name="Polat A.N."/>
            <person name="Heck A.J."/>
            <person name="Mohammed S."/>
        </authorList>
    </citation>
    <scope>PHOSPHORYLATION [LARGE SCALE ANALYSIS] AT SER-713; SER-740 AND SER-900</scope>
    <scope>IDENTIFICATION BY MASS SPECTROMETRY [LARGE SCALE ANALYSIS]</scope>
    <source>
        <tissue>Cervix carcinoma</tissue>
        <tissue>Erythroleukemia</tissue>
    </source>
</reference>
<reference key="12">
    <citation type="journal article" date="2015" name="Genes Dev.">
        <title>Screen identifies bromodomain protein ZMYND8 in chromatin recognition of transcription-associated DNA damage that promotes homologous recombination.</title>
        <authorList>
            <person name="Gong F."/>
            <person name="Chiu L.Y."/>
            <person name="Cox B."/>
            <person name="Aymard F."/>
            <person name="Clouaire T."/>
            <person name="Leung J.W."/>
            <person name="Cammarata M."/>
            <person name="Perez M."/>
            <person name="Agarwal P."/>
            <person name="Brodbelt J.S."/>
            <person name="Legube G."/>
            <person name="Miller K.M."/>
        </authorList>
    </citation>
    <scope>SUBCELLULAR LOCATION</scope>
</reference>
<reference key="13">
    <citation type="journal article" date="2016" name="EMBO J.">
        <title>BRPF3-HBO1 regulates replication origin activation and histone H3K14 acetylation.</title>
        <authorList>
            <person name="Feng Y."/>
            <person name="Vlassis A."/>
            <person name="Roques C."/>
            <person name="Lalonde M.E."/>
            <person name="Gonzalez-Aguilera C."/>
            <person name="Lambert J.P."/>
            <person name="Lee S.B."/>
            <person name="Zhao X."/>
            <person name="Alabert C."/>
            <person name="Johansen J.V."/>
            <person name="Paquet E."/>
            <person name="Yang X.J."/>
            <person name="Gingras A.C."/>
            <person name="Cote J."/>
            <person name="Groth A."/>
        </authorList>
    </citation>
    <scope>FUNCTION</scope>
    <scope>IDENTIFICATION IN THE HBO1 COMPLEX</scope>
</reference>
<reference key="14">
    <citation type="journal article" date="2016" name="J. Biol. Chem.">
        <title>The chromatin regulator BRPF3 preferentially activates the HBO1 acetyltransferase but is dispensable for mouse development and survival.</title>
        <authorList>
            <person name="Yan K."/>
            <person name="You L."/>
            <person name="Degerny C."/>
            <person name="Ghorbani M."/>
            <person name="Liu X."/>
            <person name="Chen L."/>
            <person name="Li L."/>
            <person name="Miao D."/>
            <person name="Yang X.J."/>
        </authorList>
    </citation>
    <scope>FUNCTION</scope>
    <scope>SUBCELLULAR LOCATION</scope>
    <scope>INTERACTION WITH KAT7</scope>
</reference>
<reference key="15">
    <citation type="journal article" date="2017" name="Nat. Struct. Mol. Biol.">
        <title>Site-specific mapping of the human SUMO proteome reveals co-modification with phosphorylation.</title>
        <authorList>
            <person name="Hendriks I.A."/>
            <person name="Lyon D."/>
            <person name="Young C."/>
            <person name="Jensen L.J."/>
            <person name="Vertegaal A.C."/>
            <person name="Nielsen M.L."/>
        </authorList>
    </citation>
    <scope>IDENTIFICATION BY MASS SPECTROMETRY [LARGE SCALE ANALYSIS]</scope>
</reference>
<reference key="16">
    <citation type="journal article" date="2011" name="PLoS ONE">
        <title>Structural and histone binding ability characterizations of human PWWP domains.</title>
        <authorList>
            <person name="Wu H."/>
            <person name="Zeng H."/>
            <person name="Lam R."/>
            <person name="Tempel W."/>
            <person name="Amaya M.F."/>
            <person name="Xu C."/>
            <person name="Dombrovski L."/>
            <person name="Qiu W."/>
            <person name="Wang Y."/>
            <person name="Min J."/>
        </authorList>
    </citation>
    <scope>X-RAY CRYSTALLOGRAPHY (1.9 ANGSTROMS) OF 1056-1195</scope>
</reference>
<feature type="chain" id="PRO_0000211188" description="Bromodomain and PHD finger-containing protein 3">
    <location>
        <begin position="1"/>
        <end position="1205"/>
    </location>
</feature>
<feature type="domain" description="Bromo" evidence="1">
    <location>
        <begin position="589"/>
        <end position="693"/>
    </location>
</feature>
<feature type="domain" description="PWWP" evidence="3">
    <location>
        <begin position="1076"/>
        <end position="1159"/>
    </location>
</feature>
<feature type="zinc finger region" description="PHD-type 1" evidence="2">
    <location>
        <begin position="212"/>
        <end position="262"/>
    </location>
</feature>
<feature type="zinc finger region" description="C2HC pre-PHD-type" evidence="4">
    <location>
        <begin position="266"/>
        <end position="299"/>
    </location>
</feature>
<feature type="zinc finger region" description="PHD-type 2" evidence="4">
    <location>
        <begin position="323"/>
        <end position="387"/>
    </location>
</feature>
<feature type="region of interest" description="Disordered" evidence="5">
    <location>
        <begin position="1"/>
        <end position="27"/>
    </location>
</feature>
<feature type="region of interest" description="Disordered" evidence="5">
    <location>
        <begin position="75"/>
        <end position="121"/>
    </location>
</feature>
<feature type="region of interest" description="Disordered" evidence="5">
    <location>
        <begin position="387"/>
        <end position="472"/>
    </location>
</feature>
<feature type="region of interest" description="Disordered" evidence="5">
    <location>
        <begin position="779"/>
        <end position="897"/>
    </location>
</feature>
<feature type="region of interest" description="Disordered" evidence="5">
    <location>
        <begin position="907"/>
        <end position="926"/>
    </location>
</feature>
<feature type="region of interest" description="Disordered" evidence="5">
    <location>
        <begin position="931"/>
        <end position="1015"/>
    </location>
</feature>
<feature type="compositionally biased region" description="Polar residues" evidence="5">
    <location>
        <begin position="75"/>
        <end position="84"/>
    </location>
</feature>
<feature type="compositionally biased region" description="Basic residues" evidence="5">
    <location>
        <begin position="89"/>
        <end position="99"/>
    </location>
</feature>
<feature type="compositionally biased region" description="Acidic residues" evidence="5">
    <location>
        <begin position="417"/>
        <end position="432"/>
    </location>
</feature>
<feature type="compositionally biased region" description="Basic residues" evidence="5">
    <location>
        <begin position="444"/>
        <end position="456"/>
    </location>
</feature>
<feature type="compositionally biased region" description="Acidic residues" evidence="5">
    <location>
        <begin position="817"/>
        <end position="827"/>
    </location>
</feature>
<feature type="compositionally biased region" description="Low complexity" evidence="5">
    <location>
        <begin position="839"/>
        <end position="851"/>
    </location>
</feature>
<feature type="compositionally biased region" description="Basic and acidic residues" evidence="5">
    <location>
        <begin position="942"/>
        <end position="955"/>
    </location>
</feature>
<feature type="compositionally biased region" description="Basic and acidic residues" evidence="5">
    <location>
        <begin position="980"/>
        <end position="991"/>
    </location>
</feature>
<feature type="modified residue" description="Phosphoserine" evidence="19">
    <location>
        <position position="17"/>
    </location>
</feature>
<feature type="modified residue" description="Phosphoserine" evidence="19">
    <location>
        <position position="400"/>
    </location>
</feature>
<feature type="modified residue" description="Phosphoserine" evidence="19">
    <location>
        <position position="403"/>
    </location>
</feature>
<feature type="modified residue" description="N6-acetyllysine" evidence="16">
    <location>
        <position position="447"/>
    </location>
</feature>
<feature type="modified residue" description="N6-acetyllysine" evidence="16">
    <location>
        <position position="449"/>
    </location>
</feature>
<feature type="modified residue" description="N6-acetyllysine" evidence="16">
    <location>
        <position position="671"/>
    </location>
</feature>
<feature type="modified residue" description="Phosphoserine" evidence="20">
    <location>
        <position position="713"/>
    </location>
</feature>
<feature type="modified residue" description="Phosphoserine" evidence="20">
    <location>
        <position position="740"/>
    </location>
</feature>
<feature type="modified residue" description="Phosphoserine" evidence="18 19 20">
    <location>
        <position position="900"/>
    </location>
</feature>
<feature type="modified residue" description="Phosphoserine" evidence="17">
    <location>
        <position position="962"/>
    </location>
</feature>
<feature type="modified residue" description="Phosphoserine" evidence="17">
    <location>
        <position position="965"/>
    </location>
</feature>
<feature type="splice variant" id="VSP_055549" description="In isoform 2 and isoform 3." evidence="12">
    <location>
        <begin position="727"/>
        <end position="996"/>
    </location>
</feature>
<feature type="splice variant" id="VSP_055550" description="In isoform 3." evidence="12">
    <location>
        <begin position="997"/>
        <end position="1060"/>
    </location>
</feature>
<feature type="sequence variant" id="VAR_061042" description="In dbSNP:rs45504893.">
    <original>S</original>
    <variation>G</variation>
    <location>
        <position position="177"/>
    </location>
</feature>
<feature type="sequence variant" id="VAR_048431" description="In dbSNP:rs17658935.">
    <original>A</original>
    <variation>G</variation>
    <location>
        <position position="278"/>
    </location>
</feature>
<feature type="sequence conflict" description="In Ref. 1; BAA86600." evidence="14" ref="1">
    <original>E</original>
    <variation>K</variation>
    <location>
        <position position="1075"/>
    </location>
</feature>
<feature type="strand" evidence="21">
    <location>
        <begin position="1079"/>
        <end position="1083"/>
    </location>
</feature>
<feature type="strand" evidence="21">
    <location>
        <begin position="1089"/>
        <end position="1095"/>
    </location>
</feature>
<feature type="strand" evidence="21">
    <location>
        <begin position="1104"/>
        <end position="1106"/>
    </location>
</feature>
<feature type="strand" evidence="21">
    <location>
        <begin position="1109"/>
        <end position="1111"/>
    </location>
</feature>
<feature type="helix" evidence="21">
    <location>
        <begin position="1116"/>
        <end position="1129"/>
    </location>
</feature>
<feature type="strand" evidence="21">
    <location>
        <begin position="1133"/>
        <end position="1138"/>
    </location>
</feature>
<feature type="strand" evidence="21">
    <location>
        <begin position="1145"/>
        <end position="1149"/>
    </location>
</feature>
<feature type="helix" evidence="21">
    <location>
        <begin position="1150"/>
        <end position="1152"/>
    </location>
</feature>
<feature type="strand" evidence="21">
    <location>
        <begin position="1153"/>
        <end position="1155"/>
    </location>
</feature>
<feature type="helix" evidence="21">
    <location>
        <begin position="1160"/>
        <end position="1167"/>
    </location>
</feature>
<feature type="turn" evidence="21">
    <location>
        <begin position="1168"/>
        <end position="1172"/>
    </location>
</feature>
<feature type="helix" evidence="21">
    <location>
        <begin position="1175"/>
        <end position="1193"/>
    </location>
</feature>
<keyword id="KW-0002">3D-structure</keyword>
<keyword id="KW-0007">Acetylation</keyword>
<keyword id="KW-0025">Alternative splicing</keyword>
<keyword id="KW-0103">Bromodomain</keyword>
<keyword id="KW-0156">Chromatin regulator</keyword>
<keyword id="KW-0479">Metal-binding</keyword>
<keyword id="KW-0539">Nucleus</keyword>
<keyword id="KW-0597">Phosphoprotein</keyword>
<keyword id="KW-1267">Proteomics identification</keyword>
<keyword id="KW-1185">Reference proteome</keyword>
<keyword id="KW-0677">Repeat</keyword>
<keyword id="KW-0862">Zinc</keyword>
<keyword id="KW-0863">Zinc-finger</keyword>
<sequence length="1205" mass="135745">MRKPRRKSRQNAEGRRSPSPYSLKCSPTRETLTYAQAQRIVEVDIDGRLHRISIYDPLKIITEDELTAQDITECNSNKENSEQPQFPGKSKKPSSKGKKKESCSKHASGTSFHLPQPSFRMVDSGIQPEAPPLPAAYYRYIEKPPEDLDAEVEYDMDEEDLAWLDMVNEKRRVDGHSLVSADTFELLVDRLEKESYLESRSSGAQQSLIDEDAFCCVCLDDECHNSNVILFCDICNLAVHQECYGVPYIPEGQWLCRCCLQSPSRPVDCILCPNKGGAFKQTSDGHWAHVVCAIWIPEVCFANTVFLEPIEGIDNIPPARWKLTCYICKQKGLGAAIQCHKVNCYTAFHVTCAQRAGLFMKIEPMRETSLNGTIFTVRKTAYCEAHSPPGAATARRKGDSPRSISETGDEEGLKEGDGEEEEEEEVEEEEQEAQGGVSGSLKGVPKKSKMSLKQKIKKEPEEAGQDTPSTLPMLAVPQIPSYRLNKICSGLSFQRKNQFMQRLHNYWLLKRQARNGVPLIRRLHSHLQSQRNAEQREQDEKTSAVKEELKYWQKLRHDLERARLLIELIRKREKLKREQVKVQQAAMELELMPFNVLLRTTLDLLQEKDPAHIFAEPVNLSEVPDYLEFISKPMDFSTMRRKLESHLYRTLEEFEEDFNLIVTNCMKYNAKDTIFHRAAVRLRDLGGAILRHARRQAENIGYDPERGTHLPESPKLEDFYRFSWEDVDNILIPENRAHLSPEVQLKELLEKLDLVSAMRSSGARTRRVRLLRREINALRQKLAQPPPPQPPSLNKTVSNGELPAGPQGDAAVLEQALQEEPEDDGDRDDSKLPPPPTLEPTGPAPSLSEQESPPEPPTLKPINDSKPPSRFLKPRKVEEDELLEKSPLQLGNEPLQRLLSDNGINRLSLMAPDTPAGTPLSGVGRRTSVLFKKAKNGVKLQRSPDRVLENGEDHGVAGSPASPASIEEERHSRKRPRSRSCSESEGERSPQQEEETGMTNGFGKHTESGSDSECSLGLSGGLAFEACSGLTPPKRSRGKPALSRVPFLEGVNGDSDYNGSGRSLLLPFEDRGDLEPLELVWAKCRGYPSYPALIIDPKMPREGLLHNGVPIPVPPLDVLKLGEQKQAEAGEKLFLVLFFDNKRTWQWLPRDKVLPLGVEDTVDKLKMLEGRKTSIRKSVQVAYDRAMIHLSRVRGPHSFVTSSYL</sequence>
<protein>
    <recommendedName>
        <fullName evidence="13">Bromodomain and PHD finger-containing protein 3</fullName>
    </recommendedName>
</protein>
<name>BRPF3_HUMAN</name>
<dbReference type="EMBL" id="AB033112">
    <property type="protein sequence ID" value="BAA86600.1"/>
    <property type="status" value="ALT_INIT"/>
    <property type="molecule type" value="mRNA"/>
</dbReference>
<dbReference type="EMBL" id="Z84485">
    <property type="status" value="NOT_ANNOTATED_CDS"/>
    <property type="molecule type" value="Genomic_DNA"/>
</dbReference>
<dbReference type="EMBL" id="CH471081">
    <property type="protein sequence ID" value="EAX03878.1"/>
    <property type="molecule type" value="Genomic_DNA"/>
</dbReference>
<dbReference type="EMBL" id="BC117387">
    <property type="protein sequence ID" value="AAI17388.1"/>
    <property type="molecule type" value="mRNA"/>
</dbReference>
<dbReference type="EMBL" id="BC143917">
    <property type="protein sequence ID" value="AAI43918.1"/>
    <property type="molecule type" value="mRNA"/>
</dbReference>
<dbReference type="EMBL" id="BC143918">
    <property type="protein sequence ID" value="AAI43919.1"/>
    <property type="molecule type" value="mRNA"/>
</dbReference>
<dbReference type="CCDS" id="CCDS34437.1">
    <molecule id="Q9ULD4-1"/>
</dbReference>
<dbReference type="RefSeq" id="NP_056510.2">
    <molecule id="Q9ULD4-1"/>
    <property type="nucleotide sequence ID" value="NM_015695.3"/>
</dbReference>
<dbReference type="RefSeq" id="XP_005249067.1">
    <property type="nucleotide sequence ID" value="XM_005249010.2"/>
</dbReference>
<dbReference type="RefSeq" id="XP_005249068.1">
    <property type="nucleotide sequence ID" value="XM_005249011.3"/>
</dbReference>
<dbReference type="RefSeq" id="XP_011512791.1">
    <property type="nucleotide sequence ID" value="XM_011514489.1"/>
</dbReference>
<dbReference type="RefSeq" id="XP_047274605.1">
    <molecule id="Q9ULD4-1"/>
    <property type="nucleotide sequence ID" value="XM_047418649.1"/>
</dbReference>
<dbReference type="PDB" id="3PFS">
    <property type="method" value="X-ray"/>
    <property type="resolution" value="1.90 A"/>
    <property type="chains" value="A/B=1056-1195"/>
</dbReference>
<dbReference type="PDBsum" id="3PFS"/>
<dbReference type="SMR" id="Q9ULD4"/>
<dbReference type="BioGRID" id="118036">
    <property type="interactions" value="167"/>
</dbReference>
<dbReference type="ComplexPortal" id="CPX-736">
    <property type="entry name" value="MOZ3 histone acetyltransferase complex"/>
</dbReference>
<dbReference type="ComplexPortal" id="CPX-740">
    <property type="entry name" value="MORF3 histone acetyltransferase complex"/>
</dbReference>
<dbReference type="CORUM" id="Q9ULD4"/>
<dbReference type="FunCoup" id="Q9ULD4">
    <property type="interactions" value="1340"/>
</dbReference>
<dbReference type="IntAct" id="Q9ULD4">
    <property type="interactions" value="36"/>
</dbReference>
<dbReference type="MINT" id="Q9ULD4"/>
<dbReference type="STRING" id="9606.ENSP00000350267"/>
<dbReference type="BindingDB" id="Q9ULD4"/>
<dbReference type="ChEMBL" id="CHEMBL3108644"/>
<dbReference type="GuidetoPHARMACOLOGY" id="2731"/>
<dbReference type="GlyGen" id="Q9ULD4">
    <property type="glycosylation" value="1 site, 1 N-linked glycan (1 site)"/>
</dbReference>
<dbReference type="iPTMnet" id="Q9ULD4"/>
<dbReference type="PhosphoSitePlus" id="Q9ULD4"/>
<dbReference type="SwissPalm" id="Q9ULD4"/>
<dbReference type="BioMuta" id="BRPF3"/>
<dbReference type="DMDM" id="71153496"/>
<dbReference type="jPOST" id="Q9ULD4"/>
<dbReference type="MassIVE" id="Q9ULD4"/>
<dbReference type="PaxDb" id="9606-ENSP00000350267"/>
<dbReference type="PeptideAtlas" id="Q9ULD4"/>
<dbReference type="ProteomicsDB" id="61143"/>
<dbReference type="ProteomicsDB" id="7229"/>
<dbReference type="ProteomicsDB" id="84995">
    <molecule id="Q9ULD4-1"/>
</dbReference>
<dbReference type="Pumba" id="Q9ULD4"/>
<dbReference type="ABCD" id="Q9ULD4">
    <property type="antibodies" value="1 sequenced antibody"/>
</dbReference>
<dbReference type="Antibodypedia" id="15345">
    <property type="antibodies" value="78 antibodies from 19 providers"/>
</dbReference>
<dbReference type="DNASU" id="27154"/>
<dbReference type="Ensembl" id="ENST00000339717.11">
    <molecule id="Q9ULD4-2"/>
    <property type="protein sequence ID" value="ENSP00000345419.7"/>
    <property type="gene ID" value="ENSG00000096070.19"/>
</dbReference>
<dbReference type="Ensembl" id="ENST00000357641.10">
    <molecule id="Q9ULD4-1"/>
    <property type="protein sequence ID" value="ENSP00000350267.6"/>
    <property type="gene ID" value="ENSG00000096070.19"/>
</dbReference>
<dbReference type="Ensembl" id="ENST00000534694.5">
    <molecule id="Q9ULD4-3"/>
    <property type="protein sequence ID" value="ENSP00000434501.1"/>
    <property type="gene ID" value="ENSG00000096070.19"/>
</dbReference>
<dbReference type="GeneID" id="27154"/>
<dbReference type="KEGG" id="hsa:27154"/>
<dbReference type="MANE-Select" id="ENST00000357641.10">
    <property type="protein sequence ID" value="ENSP00000350267.6"/>
    <property type="RefSeq nucleotide sequence ID" value="NM_015695.3"/>
    <property type="RefSeq protein sequence ID" value="NP_056510.2"/>
</dbReference>
<dbReference type="UCSC" id="uc003olv.5">
    <molecule id="Q9ULD4-1"/>
    <property type="organism name" value="human"/>
</dbReference>
<dbReference type="AGR" id="HGNC:14256"/>
<dbReference type="CTD" id="27154"/>
<dbReference type="DisGeNET" id="27154"/>
<dbReference type="GeneCards" id="BRPF3"/>
<dbReference type="HGNC" id="HGNC:14256">
    <property type="gene designation" value="BRPF3"/>
</dbReference>
<dbReference type="HPA" id="ENSG00000096070">
    <property type="expression patterns" value="Low tissue specificity"/>
</dbReference>
<dbReference type="neXtProt" id="NX_Q9ULD4"/>
<dbReference type="OpenTargets" id="ENSG00000096070"/>
<dbReference type="PharmGKB" id="PA25425"/>
<dbReference type="VEuPathDB" id="HostDB:ENSG00000096070"/>
<dbReference type="eggNOG" id="KOG0955">
    <property type="taxonomic scope" value="Eukaryota"/>
</dbReference>
<dbReference type="GeneTree" id="ENSGT00940000155056"/>
<dbReference type="HOGENOM" id="CLU_003589_1_0_1"/>
<dbReference type="InParanoid" id="Q9ULD4"/>
<dbReference type="OMA" id="XRSLLMP"/>
<dbReference type="OrthoDB" id="20839at2759"/>
<dbReference type="PAN-GO" id="Q9ULD4">
    <property type="GO annotations" value="2 GO annotations based on evolutionary models"/>
</dbReference>
<dbReference type="PhylomeDB" id="Q9ULD4"/>
<dbReference type="TreeFam" id="TF316118"/>
<dbReference type="PathwayCommons" id="Q9ULD4"/>
<dbReference type="Reactome" id="R-HSA-114608">
    <property type="pathway name" value="Platelet degranulation"/>
</dbReference>
<dbReference type="Reactome" id="R-HSA-3214847">
    <property type="pathway name" value="HATs acetylate histones"/>
</dbReference>
<dbReference type="Reactome" id="R-HSA-6804758">
    <property type="pathway name" value="Regulation of TP53 Activity through Acetylation"/>
</dbReference>
<dbReference type="SignaLink" id="Q9ULD4"/>
<dbReference type="BioGRID-ORCS" id="27154">
    <property type="hits" value="19 hits in 1168 CRISPR screens"/>
</dbReference>
<dbReference type="ChiTaRS" id="BRPF3">
    <property type="organism name" value="human"/>
</dbReference>
<dbReference type="EvolutionaryTrace" id="Q9ULD4"/>
<dbReference type="GenomeRNAi" id="27154"/>
<dbReference type="Pharos" id="Q9ULD4">
    <property type="development level" value="Tchem"/>
</dbReference>
<dbReference type="PRO" id="PR:Q9ULD4"/>
<dbReference type="Proteomes" id="UP000005640">
    <property type="component" value="Chromosome 6"/>
</dbReference>
<dbReference type="RNAct" id="Q9ULD4">
    <property type="molecule type" value="protein"/>
</dbReference>
<dbReference type="Bgee" id="ENSG00000096070">
    <property type="expression patterns" value="Expressed in ganglionic eminence and 140 other cell types or tissues"/>
</dbReference>
<dbReference type="ExpressionAtlas" id="Q9ULD4">
    <property type="expression patterns" value="baseline and differential"/>
</dbReference>
<dbReference type="GO" id="GO:0005829">
    <property type="term" value="C:cytosol"/>
    <property type="evidence" value="ECO:0000304"/>
    <property type="project" value="Reactome"/>
</dbReference>
<dbReference type="GO" id="GO:0005576">
    <property type="term" value="C:extracellular region"/>
    <property type="evidence" value="ECO:0000304"/>
    <property type="project" value="Reactome"/>
</dbReference>
<dbReference type="GO" id="GO:0000123">
    <property type="term" value="C:histone acetyltransferase complex"/>
    <property type="evidence" value="ECO:0000314"/>
    <property type="project" value="UniProtKB"/>
</dbReference>
<dbReference type="GO" id="GO:0070776">
    <property type="term" value="C:MOZ/MORF histone acetyltransferase complex"/>
    <property type="evidence" value="ECO:0000314"/>
    <property type="project" value="UniProtKB"/>
</dbReference>
<dbReference type="GO" id="GO:0005634">
    <property type="term" value="C:nucleus"/>
    <property type="evidence" value="ECO:0000314"/>
    <property type="project" value="UniProtKB"/>
</dbReference>
<dbReference type="GO" id="GO:0008270">
    <property type="term" value="F:zinc ion binding"/>
    <property type="evidence" value="ECO:0007669"/>
    <property type="project" value="UniProtKB-KW"/>
</dbReference>
<dbReference type="GO" id="GO:0006338">
    <property type="term" value="P:chromatin remodeling"/>
    <property type="evidence" value="ECO:0007669"/>
    <property type="project" value="GOC"/>
</dbReference>
<dbReference type="GO" id="GO:0045740">
    <property type="term" value="P:positive regulation of DNA replication"/>
    <property type="evidence" value="ECO:0000314"/>
    <property type="project" value="UniProtKB"/>
</dbReference>
<dbReference type="GO" id="GO:0050793">
    <property type="term" value="P:regulation of developmental process"/>
    <property type="evidence" value="ECO:0000303"/>
    <property type="project" value="ComplexPortal"/>
</dbReference>
<dbReference type="GO" id="GO:0006355">
    <property type="term" value="P:regulation of DNA-templated transcription"/>
    <property type="evidence" value="ECO:0000250"/>
    <property type="project" value="ComplexPortal"/>
</dbReference>
<dbReference type="GO" id="GO:1903706">
    <property type="term" value="P:regulation of hemopoiesis"/>
    <property type="evidence" value="ECO:0000303"/>
    <property type="project" value="ComplexPortal"/>
</dbReference>
<dbReference type="GO" id="GO:0006357">
    <property type="term" value="P:regulation of transcription by RNA polymerase II"/>
    <property type="evidence" value="ECO:0000318"/>
    <property type="project" value="GO_Central"/>
</dbReference>
<dbReference type="CDD" id="cd05512">
    <property type="entry name" value="Bromo_brd1_like"/>
    <property type="match status" value="1"/>
</dbReference>
<dbReference type="CDD" id="cd15703">
    <property type="entry name" value="ePHD_BRPF3"/>
    <property type="match status" value="1"/>
</dbReference>
<dbReference type="CDD" id="cd15572">
    <property type="entry name" value="PHD_BRPF"/>
    <property type="match status" value="1"/>
</dbReference>
<dbReference type="CDD" id="cd20158">
    <property type="entry name" value="PWWP_BRPF3"/>
    <property type="match status" value="1"/>
</dbReference>
<dbReference type="FunFam" id="3.30.40.10:FF:000008">
    <property type="entry name" value="Bromodomain containing 1, isoform CRA_a"/>
    <property type="match status" value="1"/>
</dbReference>
<dbReference type="FunFam" id="2.30.30.140:FF:000008">
    <property type="entry name" value="Bromodomain containing 1, isoform CRA_b"/>
    <property type="match status" value="1"/>
</dbReference>
<dbReference type="FunFam" id="3.30.40.10:FF:000007">
    <property type="entry name" value="Bromodomain containing 1, isoform CRA_b"/>
    <property type="match status" value="1"/>
</dbReference>
<dbReference type="FunFam" id="1.20.920.10:FF:000007">
    <property type="entry name" value="Bromodomain-containing protein 1"/>
    <property type="match status" value="1"/>
</dbReference>
<dbReference type="Gene3D" id="2.30.30.140">
    <property type="match status" value="1"/>
</dbReference>
<dbReference type="Gene3D" id="1.20.920.10">
    <property type="entry name" value="Bromodomain-like"/>
    <property type="match status" value="1"/>
</dbReference>
<dbReference type="Gene3D" id="3.30.40.10">
    <property type="entry name" value="Zinc/RING finger domain, C3HC4 (zinc finger)"/>
    <property type="match status" value="2"/>
</dbReference>
<dbReference type="InterPro" id="IPR001487">
    <property type="entry name" value="Bromodomain"/>
</dbReference>
<dbReference type="InterPro" id="IPR036427">
    <property type="entry name" value="Bromodomain-like_sf"/>
</dbReference>
<dbReference type="InterPro" id="IPR018359">
    <property type="entry name" value="Bromodomain_CS"/>
</dbReference>
<dbReference type="InterPro" id="IPR042005">
    <property type="entry name" value="BRPF3_ePHD"/>
</dbReference>
<dbReference type="InterPro" id="IPR019542">
    <property type="entry name" value="Enhancer_polycomb-like_N"/>
</dbReference>
<dbReference type="InterPro" id="IPR034732">
    <property type="entry name" value="EPHD"/>
</dbReference>
<dbReference type="InterPro" id="IPR050701">
    <property type="entry name" value="Histone_Mod_Regulator"/>
</dbReference>
<dbReference type="InterPro" id="IPR000313">
    <property type="entry name" value="PWWP_dom"/>
</dbReference>
<dbReference type="InterPro" id="IPR019786">
    <property type="entry name" value="Zinc_finger_PHD-type_CS"/>
</dbReference>
<dbReference type="InterPro" id="IPR011011">
    <property type="entry name" value="Znf_FYVE_PHD"/>
</dbReference>
<dbReference type="InterPro" id="IPR001965">
    <property type="entry name" value="Znf_PHD"/>
</dbReference>
<dbReference type="InterPro" id="IPR019787">
    <property type="entry name" value="Znf_PHD-finger"/>
</dbReference>
<dbReference type="InterPro" id="IPR013083">
    <property type="entry name" value="Znf_RING/FYVE/PHD"/>
</dbReference>
<dbReference type="PANTHER" id="PTHR13793:SF19">
    <property type="entry name" value="BROMODOMAIN AND PHD FINGER-CONTAINING PROTEIN 3"/>
    <property type="match status" value="1"/>
</dbReference>
<dbReference type="PANTHER" id="PTHR13793">
    <property type="entry name" value="PHD FINGER PROTEINS"/>
    <property type="match status" value="1"/>
</dbReference>
<dbReference type="Pfam" id="PF00439">
    <property type="entry name" value="Bromodomain"/>
    <property type="match status" value="1"/>
</dbReference>
<dbReference type="Pfam" id="PF10513">
    <property type="entry name" value="EPL1"/>
    <property type="match status" value="1"/>
</dbReference>
<dbReference type="Pfam" id="PF13831">
    <property type="entry name" value="PHD_2"/>
    <property type="match status" value="1"/>
</dbReference>
<dbReference type="Pfam" id="PF00855">
    <property type="entry name" value="PWWP"/>
    <property type="match status" value="1"/>
</dbReference>
<dbReference type="Pfam" id="PF13832">
    <property type="entry name" value="zf-HC5HC2H_2"/>
    <property type="match status" value="1"/>
</dbReference>
<dbReference type="PRINTS" id="PR00503">
    <property type="entry name" value="BROMODOMAIN"/>
</dbReference>
<dbReference type="SMART" id="SM00297">
    <property type="entry name" value="BROMO"/>
    <property type="match status" value="1"/>
</dbReference>
<dbReference type="SMART" id="SM00249">
    <property type="entry name" value="PHD"/>
    <property type="match status" value="2"/>
</dbReference>
<dbReference type="SMART" id="SM00293">
    <property type="entry name" value="PWWP"/>
    <property type="match status" value="1"/>
</dbReference>
<dbReference type="SUPFAM" id="SSF47370">
    <property type="entry name" value="Bromodomain"/>
    <property type="match status" value="1"/>
</dbReference>
<dbReference type="SUPFAM" id="SSF57903">
    <property type="entry name" value="FYVE/PHD zinc finger"/>
    <property type="match status" value="1"/>
</dbReference>
<dbReference type="SUPFAM" id="SSF63748">
    <property type="entry name" value="Tudor/PWWP/MBT"/>
    <property type="match status" value="1"/>
</dbReference>
<dbReference type="PROSITE" id="PS00633">
    <property type="entry name" value="BROMODOMAIN_1"/>
    <property type="match status" value="1"/>
</dbReference>
<dbReference type="PROSITE" id="PS50014">
    <property type="entry name" value="BROMODOMAIN_2"/>
    <property type="match status" value="1"/>
</dbReference>
<dbReference type="PROSITE" id="PS51805">
    <property type="entry name" value="EPHD"/>
    <property type="match status" value="1"/>
</dbReference>
<dbReference type="PROSITE" id="PS50812">
    <property type="entry name" value="PWWP"/>
    <property type="match status" value="1"/>
</dbReference>
<dbReference type="PROSITE" id="PS01359">
    <property type="entry name" value="ZF_PHD_1"/>
    <property type="match status" value="1"/>
</dbReference>
<dbReference type="PROSITE" id="PS50016">
    <property type="entry name" value="ZF_PHD_2"/>
    <property type="match status" value="1"/>
</dbReference>
<accession>Q9ULD4</accession>
<accession>A6ND56</accession>
<accession>A6NJE2</accession>
<accession>B7ZLN5</accession>
<accession>E7EX85</accession>
<accession>Q17RB6</accession>
<accession>Q5R3K8</accession>
<evidence type="ECO:0000255" key="1">
    <source>
        <dbReference type="PROSITE-ProRule" id="PRU00035"/>
    </source>
</evidence>
<evidence type="ECO:0000255" key="2">
    <source>
        <dbReference type="PROSITE-ProRule" id="PRU00146"/>
    </source>
</evidence>
<evidence type="ECO:0000255" key="3">
    <source>
        <dbReference type="PROSITE-ProRule" id="PRU00162"/>
    </source>
</evidence>
<evidence type="ECO:0000255" key="4">
    <source>
        <dbReference type="PROSITE-ProRule" id="PRU01146"/>
    </source>
</evidence>
<evidence type="ECO:0000256" key="5">
    <source>
        <dbReference type="SAM" id="MobiDB-lite"/>
    </source>
</evidence>
<evidence type="ECO:0000269" key="6">
    <source>
    </source>
</evidence>
<evidence type="ECO:0000269" key="7">
    <source>
    </source>
</evidence>
<evidence type="ECO:0000269" key="8">
    <source>
    </source>
</evidence>
<evidence type="ECO:0000269" key="9">
    <source>
    </source>
</evidence>
<evidence type="ECO:0000269" key="10">
    <source>
    </source>
</evidence>
<evidence type="ECO:0000303" key="11">
    <source>
    </source>
</evidence>
<evidence type="ECO:0000303" key="12">
    <source>
    </source>
</evidence>
<evidence type="ECO:0000303" key="13">
    <source>
    </source>
</evidence>
<evidence type="ECO:0000305" key="14"/>
<evidence type="ECO:0000312" key="15">
    <source>
        <dbReference type="HGNC" id="HGNC:14256"/>
    </source>
</evidence>
<evidence type="ECO:0007744" key="16">
    <source>
    </source>
</evidence>
<evidence type="ECO:0007744" key="17">
    <source>
    </source>
</evidence>
<evidence type="ECO:0007744" key="18">
    <source>
    </source>
</evidence>
<evidence type="ECO:0007744" key="19">
    <source>
    </source>
</evidence>
<evidence type="ECO:0007744" key="20">
    <source>
    </source>
</evidence>
<evidence type="ECO:0007829" key="21">
    <source>
        <dbReference type="PDB" id="3PFS"/>
    </source>
</evidence>
<organism>
    <name type="scientific">Homo sapiens</name>
    <name type="common">Human</name>
    <dbReference type="NCBI Taxonomy" id="9606"/>
    <lineage>
        <taxon>Eukaryota</taxon>
        <taxon>Metazoa</taxon>
        <taxon>Chordata</taxon>
        <taxon>Craniata</taxon>
        <taxon>Vertebrata</taxon>
        <taxon>Euteleostomi</taxon>
        <taxon>Mammalia</taxon>
        <taxon>Eutheria</taxon>
        <taxon>Euarchontoglires</taxon>
        <taxon>Primates</taxon>
        <taxon>Haplorrhini</taxon>
        <taxon>Catarrhini</taxon>
        <taxon>Hominidae</taxon>
        <taxon>Homo</taxon>
    </lineage>
</organism>
<proteinExistence type="evidence at protein level"/>
<comment type="function">
    <text evidence="6 9 10">Scaffold subunit of various histone acetyltransferase (HAT) complexes, such as the MOZ/MORF and HBO1 complexes, which have a histone H3 acetyltransferase activity (PubMed:16387653, PubMed:26620551, PubMed:26677226). Plays a role in DNA replication initiation by directing KAT7/HBO1 specificity towards histone H3 'Lys-14' acetylation (H3K14ac), thereby facilitating the activation of replication origins (PubMed:26620551). Component of the MOZ/MORF complex which has a histone H3 acetyltransferase activity (PubMed:16387653).</text>
</comment>
<comment type="subunit">
    <text evidence="6 7 9 10">Component of some HBO1 complex composed of KAT7/HBO1, MEAF6, ING4 or ING5, and BRPF3 (PubMed:26620551). Component of the MOZ/MORF complex composed at least of ING5, KAT6A, KAT6B, MEAF6 and one of BRPF1, BRD1/BRPF2 and BRPF3 (PubMed:16387653, PubMed:18794358). Interacts with KAT7/HBO1; the interaction is direct (PubMed:26677226).</text>
</comment>
<comment type="interaction">
    <interactant intactId="EBI-1753470">
        <id>Q9ULD4</id>
    </interactant>
    <interactant intactId="EBI-389883">
        <id>P16333</id>
        <label>NCK1</label>
    </interactant>
    <organismsDiffer>false</organismsDiffer>
    <experiments>3</experiments>
</comment>
<comment type="interaction">
    <interactant intactId="EBI-1753470">
        <id>Q9ULD4</id>
    </interactant>
    <interactant intactId="EBI-2007911">
        <id>Q16236</id>
        <label>NFE2L2</label>
    </interactant>
    <organismsDiffer>false</organismsDiffer>
    <experiments>3</experiments>
</comment>
<comment type="interaction">
    <interactant intactId="EBI-23662416">
        <id>Q9ULD4-2</id>
    </interactant>
    <interactant intactId="EBI-351428">
        <id>P61158</id>
        <label>ACTR3</label>
    </interactant>
    <organismsDiffer>false</organismsDiffer>
    <experiments>3</experiments>
</comment>
<comment type="interaction">
    <interactant intactId="EBI-23662416">
        <id>Q9ULD4-2</id>
    </interactant>
    <interactant intactId="EBI-491169">
        <id>P07550</id>
        <label>ADRB2</label>
    </interactant>
    <organismsDiffer>false</organismsDiffer>
    <experiments>3</experiments>
</comment>
<comment type="interaction">
    <interactant intactId="EBI-23662416">
        <id>Q9ULD4-2</id>
    </interactant>
    <interactant intactId="EBI-25837549">
        <id>P28329-3</id>
        <label>CHAT</label>
    </interactant>
    <organismsDiffer>false</organismsDiffer>
    <experiments>3</experiments>
</comment>
<comment type="interaction">
    <interactant intactId="EBI-23662416">
        <id>Q9ULD4-2</id>
    </interactant>
    <interactant intactId="EBI-348399">
        <id>P22607</id>
        <label>FGFR3</label>
    </interactant>
    <organismsDiffer>false</organismsDiffer>
    <experiments>3</experiments>
</comment>
<comment type="interaction">
    <interactant intactId="EBI-23662416">
        <id>Q9ULD4-2</id>
    </interactant>
    <interactant intactId="EBI-8285963">
        <id>Q14957</id>
        <label>GRIN2C</label>
    </interactant>
    <organismsDiffer>false</organismsDiffer>
    <experiments>3</experiments>
</comment>
<comment type="interaction">
    <interactant intactId="EBI-23662416">
        <id>Q9ULD4-2</id>
    </interactant>
    <interactant intactId="EBI-351506">
        <id>P06396</id>
        <label>GSN</label>
    </interactant>
    <organismsDiffer>false</organismsDiffer>
    <experiments>3</experiments>
</comment>
<comment type="interaction">
    <interactant intactId="EBI-23662416">
        <id>Q9ULD4-2</id>
    </interactant>
    <interactant intactId="EBI-350145">
        <id>P01112</id>
        <label>HRAS</label>
    </interactant>
    <organismsDiffer>false</organismsDiffer>
    <experiments>3</experiments>
</comment>
<comment type="interaction">
    <interactant intactId="EBI-23662416">
        <id>Q9ULD4-2</id>
    </interactant>
    <interactant intactId="EBI-354921">
        <id>P11021</id>
        <label>HSPA5</label>
    </interactant>
    <organismsDiffer>false</organismsDiffer>
    <experiments>3</experiments>
</comment>
<comment type="interaction">
    <interactant intactId="EBI-23662416">
        <id>Q9ULD4-2</id>
    </interactant>
    <interactant intactId="EBI-351935">
        <id>P02545</id>
        <label>LMNA</label>
    </interactant>
    <organismsDiffer>false</organismsDiffer>
    <experiments>3</experiments>
</comment>
<comment type="interaction">
    <interactant intactId="EBI-23662416">
        <id>Q9ULD4-2</id>
    </interactant>
    <interactant intactId="EBI-5235340">
        <id>Q7Z699</id>
        <label>SPRED1</label>
    </interactant>
    <organismsDiffer>false</organismsDiffer>
    <experiments>3</experiments>
</comment>
<comment type="interaction">
    <interactant intactId="EBI-23662416">
        <id>Q9ULD4-2</id>
    </interactant>
    <interactant intactId="EBI-356553">
        <id>P17987</id>
        <label>TCP1</label>
    </interactant>
    <organismsDiffer>false</organismsDiffer>
    <experiments>3</experiments>
</comment>
<comment type="interaction">
    <interactant intactId="EBI-23662416">
        <id>Q9ULD4-2</id>
    </interactant>
    <interactant intactId="EBI-346882">
        <id>Q99816</id>
        <label>TSG101</label>
    </interactant>
    <organismsDiffer>false</organismsDiffer>
    <experiments>3</experiments>
</comment>
<comment type="interaction">
    <interactant intactId="EBI-23662416">
        <id>Q9ULD4-2</id>
    </interactant>
    <interactant intactId="EBI-741480">
        <id>Q9UMX0</id>
        <label>UBQLN1</label>
    </interactant>
    <organismsDiffer>false</organismsDiffer>
    <experiments>3</experiments>
</comment>
<comment type="interaction">
    <interactant intactId="EBI-23662416">
        <id>Q9ULD4-2</id>
    </interactant>
    <interactant intactId="EBI-25900580">
        <id>Q9Y649</id>
    </interactant>
    <organismsDiffer>false</organismsDiffer>
    <experiments>3</experiments>
</comment>
<comment type="subcellular location">
    <subcellularLocation>
        <location evidence="8 10">Nucleus</location>
    </subcellularLocation>
</comment>
<comment type="alternative products">
    <event type="alternative splicing"/>
    <isoform>
        <id>Q9ULD4-1</id>
        <name>1</name>
        <sequence type="displayed"/>
    </isoform>
    <isoform>
        <id>Q9ULD4-2</id>
        <name>2</name>
        <sequence type="described" ref="VSP_055549"/>
    </isoform>
    <isoform>
        <id>Q9ULD4-3</id>
        <name>3</name>
        <sequence type="described" ref="VSP_055549 VSP_055550"/>
    </isoform>
</comment>
<comment type="sequence caution" evidence="14">
    <conflict type="erroneous initiation">
        <sequence resource="EMBL-CDS" id="BAA86600"/>
    </conflict>
</comment>
<gene>
    <name evidence="13 15" type="primary">BRPF3</name>
    <name evidence="11" type="synonym">KIAA1286</name>
</gene>